<sequence length="156" mass="17440">MSLVPSFFGGRRTNVFDPFSLDVWDPFEGFLTPGLTNAPAKDVAAFTNAKVDWRETPEAHVFKADVPGLKKEEVKVEVEDGNILQISGERSSENEEKSDTWHRVERSSGKFMRRFRLPENAKVEEVKASMENGVLSVTVPKVQESKPEVKSVDISG</sequence>
<name>HSP17_ARATH</name>
<reference key="1">
    <citation type="journal article" date="1989" name="Mol. Gen. Genet.">
        <title>Characterization of two genes encoding small heat-shock proteins in Arabidopsis thaliana.</title>
        <authorList>
            <person name="Takahashi T."/>
            <person name="Komeda Y."/>
        </authorList>
    </citation>
    <scope>NUCLEOTIDE SEQUENCE [GENOMIC DNA]</scope>
    <source>
        <strain>cv. Columbia</strain>
    </source>
</reference>
<reference key="2">
    <citation type="journal article" date="2000" name="Nature">
        <title>Sequence and analysis of chromosome 3 of the plant Arabidopsis thaliana.</title>
        <authorList>
            <person name="Salanoubat M."/>
            <person name="Lemcke K."/>
            <person name="Rieger M."/>
            <person name="Ansorge W."/>
            <person name="Unseld M."/>
            <person name="Fartmann B."/>
            <person name="Valle G."/>
            <person name="Bloecker H."/>
            <person name="Perez-Alonso M."/>
            <person name="Obermaier B."/>
            <person name="Delseny M."/>
            <person name="Boutry M."/>
            <person name="Grivell L.A."/>
            <person name="Mache R."/>
            <person name="Puigdomenech P."/>
            <person name="De Simone V."/>
            <person name="Choisne N."/>
            <person name="Artiguenave F."/>
            <person name="Robert C."/>
            <person name="Brottier P."/>
            <person name="Wincker P."/>
            <person name="Cattolico L."/>
            <person name="Weissenbach J."/>
            <person name="Saurin W."/>
            <person name="Quetier F."/>
            <person name="Schaefer M."/>
            <person name="Mueller-Auer S."/>
            <person name="Gabel C."/>
            <person name="Fuchs M."/>
            <person name="Benes V."/>
            <person name="Wurmbach E."/>
            <person name="Drzonek H."/>
            <person name="Erfle H."/>
            <person name="Jordan N."/>
            <person name="Bangert S."/>
            <person name="Wiedelmann R."/>
            <person name="Kranz H."/>
            <person name="Voss H."/>
            <person name="Holland R."/>
            <person name="Brandt P."/>
            <person name="Nyakatura G."/>
            <person name="Vezzi A."/>
            <person name="D'Angelo M."/>
            <person name="Pallavicini A."/>
            <person name="Toppo S."/>
            <person name="Simionati B."/>
            <person name="Conrad A."/>
            <person name="Hornischer K."/>
            <person name="Kauer G."/>
            <person name="Loehnert T.-H."/>
            <person name="Nordsiek G."/>
            <person name="Reichelt J."/>
            <person name="Scharfe M."/>
            <person name="Schoen O."/>
            <person name="Bargues M."/>
            <person name="Terol J."/>
            <person name="Climent J."/>
            <person name="Navarro P."/>
            <person name="Collado C."/>
            <person name="Perez-Perez A."/>
            <person name="Ottenwaelder B."/>
            <person name="Duchemin D."/>
            <person name="Cooke R."/>
            <person name="Laudie M."/>
            <person name="Berger-Llauro C."/>
            <person name="Purnelle B."/>
            <person name="Masuy D."/>
            <person name="de Haan M."/>
            <person name="Maarse A.C."/>
            <person name="Alcaraz J.-P."/>
            <person name="Cottet A."/>
            <person name="Casacuberta E."/>
            <person name="Monfort A."/>
            <person name="Argiriou A."/>
            <person name="Flores M."/>
            <person name="Liguori R."/>
            <person name="Vitale D."/>
            <person name="Mannhaupt G."/>
            <person name="Haase D."/>
            <person name="Schoof H."/>
            <person name="Rudd S."/>
            <person name="Zaccaria P."/>
            <person name="Mewes H.-W."/>
            <person name="Mayer K.F.X."/>
            <person name="Kaul S."/>
            <person name="Town C.D."/>
            <person name="Koo H.L."/>
            <person name="Tallon L.J."/>
            <person name="Jenkins J."/>
            <person name="Rooney T."/>
            <person name="Rizzo M."/>
            <person name="Walts A."/>
            <person name="Utterback T."/>
            <person name="Fujii C.Y."/>
            <person name="Shea T.P."/>
            <person name="Creasy T.H."/>
            <person name="Haas B."/>
            <person name="Maiti R."/>
            <person name="Wu D."/>
            <person name="Peterson J."/>
            <person name="Van Aken S."/>
            <person name="Pai G."/>
            <person name="Militscher J."/>
            <person name="Sellers P."/>
            <person name="Gill J.E."/>
            <person name="Feldblyum T.V."/>
            <person name="Preuss D."/>
            <person name="Lin X."/>
            <person name="Nierman W.C."/>
            <person name="Salzberg S.L."/>
            <person name="White O."/>
            <person name="Venter J.C."/>
            <person name="Fraser C.M."/>
            <person name="Kaneko T."/>
            <person name="Nakamura Y."/>
            <person name="Sato S."/>
            <person name="Kato T."/>
            <person name="Asamizu E."/>
            <person name="Sasamoto S."/>
            <person name="Kimura T."/>
            <person name="Idesawa K."/>
            <person name="Kawashima K."/>
            <person name="Kishida Y."/>
            <person name="Kiyokawa C."/>
            <person name="Kohara M."/>
            <person name="Matsumoto M."/>
            <person name="Matsuno A."/>
            <person name="Muraki A."/>
            <person name="Nakayama S."/>
            <person name="Nakazaki N."/>
            <person name="Shinpo S."/>
            <person name="Takeuchi C."/>
            <person name="Wada T."/>
            <person name="Watanabe A."/>
            <person name="Yamada M."/>
            <person name="Yasuda M."/>
            <person name="Tabata S."/>
        </authorList>
    </citation>
    <scope>NUCLEOTIDE SEQUENCE [LARGE SCALE GENOMIC DNA]</scope>
    <source>
        <strain>cv. Columbia</strain>
    </source>
</reference>
<reference key="3">
    <citation type="journal article" date="2017" name="Plant J.">
        <title>Araport11: a complete reannotation of the Arabidopsis thaliana reference genome.</title>
        <authorList>
            <person name="Cheng C.Y."/>
            <person name="Krishnakumar V."/>
            <person name="Chan A.P."/>
            <person name="Thibaud-Nissen F."/>
            <person name="Schobel S."/>
            <person name="Town C.D."/>
        </authorList>
    </citation>
    <scope>GENOME REANNOTATION</scope>
    <source>
        <strain>cv. Columbia</strain>
    </source>
</reference>
<reference key="4">
    <citation type="journal article" date="2003" name="Science">
        <title>Empirical analysis of transcriptional activity in the Arabidopsis genome.</title>
        <authorList>
            <person name="Yamada K."/>
            <person name="Lim J."/>
            <person name="Dale J.M."/>
            <person name="Chen H."/>
            <person name="Shinn P."/>
            <person name="Palm C.J."/>
            <person name="Southwick A.M."/>
            <person name="Wu H.C."/>
            <person name="Kim C.J."/>
            <person name="Nguyen M."/>
            <person name="Pham P.K."/>
            <person name="Cheuk R.F."/>
            <person name="Karlin-Newmann G."/>
            <person name="Liu S.X."/>
            <person name="Lam B."/>
            <person name="Sakano H."/>
            <person name="Wu T."/>
            <person name="Yu G."/>
            <person name="Miranda M."/>
            <person name="Quach H.L."/>
            <person name="Tripp M."/>
            <person name="Chang C.H."/>
            <person name="Lee J.M."/>
            <person name="Toriumi M.J."/>
            <person name="Chan M.M."/>
            <person name="Tang C.C."/>
            <person name="Onodera C.S."/>
            <person name="Deng J.M."/>
            <person name="Akiyama K."/>
            <person name="Ansari Y."/>
            <person name="Arakawa T."/>
            <person name="Banh J."/>
            <person name="Banno F."/>
            <person name="Bowser L."/>
            <person name="Brooks S.Y."/>
            <person name="Carninci P."/>
            <person name="Chao Q."/>
            <person name="Choy N."/>
            <person name="Enju A."/>
            <person name="Goldsmith A.D."/>
            <person name="Gurjal M."/>
            <person name="Hansen N.F."/>
            <person name="Hayashizaki Y."/>
            <person name="Johnson-Hopson C."/>
            <person name="Hsuan V.W."/>
            <person name="Iida K."/>
            <person name="Karnes M."/>
            <person name="Khan S."/>
            <person name="Koesema E."/>
            <person name="Ishida J."/>
            <person name="Jiang P.X."/>
            <person name="Jones T."/>
            <person name="Kawai J."/>
            <person name="Kamiya A."/>
            <person name="Meyers C."/>
            <person name="Nakajima M."/>
            <person name="Narusaka M."/>
            <person name="Seki M."/>
            <person name="Sakurai T."/>
            <person name="Satou M."/>
            <person name="Tamse R."/>
            <person name="Vaysberg M."/>
            <person name="Wallender E.K."/>
            <person name="Wong C."/>
            <person name="Yamamura Y."/>
            <person name="Yuan S."/>
            <person name="Shinozaki K."/>
            <person name="Davis R.W."/>
            <person name="Theologis A."/>
            <person name="Ecker J.R."/>
        </authorList>
    </citation>
    <scope>NUCLEOTIDE SEQUENCE [LARGE SCALE MRNA]</scope>
    <source>
        <strain>cv. Columbia</strain>
    </source>
</reference>
<reference key="5">
    <citation type="journal article" date="2011" name="Plant Physiol.">
        <title>Small heat shock protein Hsp17.8 functions as an AKR2A cofactor in the targeting of chloroplast outer membrane proteins in Arabidopsis.</title>
        <authorList>
            <person name="Kim D.H."/>
            <person name="Xu Z.-Y."/>
            <person name="Na Y.J."/>
            <person name="Yoo Y.-J."/>
            <person name="Lee J."/>
            <person name="Sohn E.-J."/>
            <person name="Hwang I."/>
        </authorList>
    </citation>
    <scope>INTERACTION WITH AKR2A</scope>
    <scope>INDUCTION BY HEAT SHOCK</scope>
    <source>
        <strain>cv. Columbia</strain>
    </source>
</reference>
<evidence type="ECO:0000255" key="1">
    <source>
        <dbReference type="PROSITE-ProRule" id="PRU00285"/>
    </source>
</evidence>
<evidence type="ECO:0000269" key="2">
    <source>
    </source>
</evidence>
<evidence type="ECO:0000305" key="3"/>
<protein>
    <recommendedName>
        <fullName>17.4 kDa class I heat shock protein</fullName>
    </recommendedName>
    <alternativeName>
        <fullName>17.4 kDa heat shock protein 1</fullName>
        <shortName>AtHsp17.4A</shortName>
    </alternativeName>
</protein>
<feature type="chain" id="PRO_0000125970" description="17.4 kDa class I heat shock protein">
    <location>
        <begin position="1"/>
        <end position="156"/>
    </location>
</feature>
<feature type="domain" description="sHSP" evidence="1">
    <location>
        <begin position="42"/>
        <end position="156"/>
    </location>
</feature>
<feature type="sequence conflict" description="In Ref. 4; AAK95252/AAN28742." evidence="3" ref="4">
    <original>S</original>
    <variation>T</variation>
    <location>
        <position position="6"/>
    </location>
</feature>
<feature type="sequence conflict" description="In Ref. 1; CAA35182." evidence="3" ref="1">
    <original>V</original>
    <variation>I</variation>
    <location>
        <position position="152"/>
    </location>
</feature>
<keyword id="KW-0963">Cytoplasm</keyword>
<keyword id="KW-1185">Reference proteome</keyword>
<keyword id="KW-0346">Stress response</keyword>
<gene>
    <name type="primary">HSP17.4A</name>
    <name type="ordered locus">At3g46230</name>
    <name type="ORF">F12M12_200</name>
</gene>
<organism>
    <name type="scientific">Arabidopsis thaliana</name>
    <name type="common">Mouse-ear cress</name>
    <dbReference type="NCBI Taxonomy" id="3702"/>
    <lineage>
        <taxon>Eukaryota</taxon>
        <taxon>Viridiplantae</taxon>
        <taxon>Streptophyta</taxon>
        <taxon>Embryophyta</taxon>
        <taxon>Tracheophyta</taxon>
        <taxon>Spermatophyta</taxon>
        <taxon>Magnoliopsida</taxon>
        <taxon>eudicotyledons</taxon>
        <taxon>Gunneridae</taxon>
        <taxon>Pentapetalae</taxon>
        <taxon>rosids</taxon>
        <taxon>malvids</taxon>
        <taxon>Brassicales</taxon>
        <taxon>Brassicaceae</taxon>
        <taxon>Camelineae</taxon>
        <taxon>Arabidopsis</taxon>
    </lineage>
</organism>
<accession>P19036</accession>
<accession>Q540N8</accession>
<accession>Q94EJ5</accession>
<accession>Q9LX72</accession>
<comment type="subunit">
    <text evidence="2 3">May form oligomeric structures. Binds to AKR2A (PubMed:21730198).</text>
</comment>
<comment type="subcellular location">
    <subcellularLocation>
        <location evidence="3">Cytoplasm</location>
    </subcellularLocation>
</comment>
<comment type="induction">
    <text evidence="2">Accumulates after heat shock.</text>
</comment>
<comment type="similarity">
    <text evidence="1">Belongs to the small heat shock protein (HSP20) family.</text>
</comment>
<dbReference type="EMBL" id="X17293">
    <property type="protein sequence ID" value="CAA35182.1"/>
    <property type="molecule type" value="Genomic_DNA"/>
</dbReference>
<dbReference type="EMBL" id="AL355775">
    <property type="protein sequence ID" value="CAB90950.1"/>
    <property type="molecule type" value="Genomic_DNA"/>
</dbReference>
<dbReference type="EMBL" id="CP002686">
    <property type="protein sequence ID" value="AEE78138.1"/>
    <property type="molecule type" value="Genomic_DNA"/>
</dbReference>
<dbReference type="EMBL" id="AF410266">
    <property type="protein sequence ID" value="AAK95252.1"/>
    <property type="molecule type" value="mRNA"/>
</dbReference>
<dbReference type="EMBL" id="AY143803">
    <property type="protein sequence ID" value="AAN28742.1"/>
    <property type="molecule type" value="mRNA"/>
</dbReference>
<dbReference type="PIR" id="JQ0351">
    <property type="entry name" value="JQ0351"/>
</dbReference>
<dbReference type="PIR" id="T49264">
    <property type="entry name" value="T49264"/>
</dbReference>
<dbReference type="SMR" id="P19036"/>
<dbReference type="BioGRID" id="9088">
    <property type="interactions" value="2"/>
</dbReference>
<dbReference type="FunCoup" id="P19036">
    <property type="interactions" value="203"/>
</dbReference>
<dbReference type="IntAct" id="P19036">
    <property type="interactions" value="1"/>
</dbReference>
<dbReference type="STRING" id="3702.P19036"/>
<dbReference type="PaxDb" id="3702-AT3G46230.1"/>
<dbReference type="ProteomicsDB" id="232090"/>
<dbReference type="EnsemblPlants" id="AT3G46230.1">
    <property type="protein sequence ID" value="AT3G46230.1"/>
    <property type="gene ID" value="AT3G46230"/>
</dbReference>
<dbReference type="Gramene" id="AT3G46230.1">
    <property type="protein sequence ID" value="AT3G46230.1"/>
    <property type="gene ID" value="AT3G46230"/>
</dbReference>
<dbReference type="KEGG" id="ath:AT3G46230"/>
<dbReference type="Araport" id="AT3G46230"/>
<dbReference type="TAIR" id="AT3G46230">
    <property type="gene designation" value="HSP17.4"/>
</dbReference>
<dbReference type="eggNOG" id="KOG0710">
    <property type="taxonomic scope" value="Eukaryota"/>
</dbReference>
<dbReference type="HOGENOM" id="CLU_046737_5_0_1"/>
<dbReference type="InParanoid" id="P19036"/>
<dbReference type="OMA" id="CANSDAA"/>
<dbReference type="PhylomeDB" id="P19036"/>
<dbReference type="PRO" id="PR:P19036"/>
<dbReference type="Proteomes" id="UP000006548">
    <property type="component" value="Chromosome 3"/>
</dbReference>
<dbReference type="ExpressionAtlas" id="P19036">
    <property type="expression patterns" value="baseline and differential"/>
</dbReference>
<dbReference type="GO" id="GO:0005737">
    <property type="term" value="C:cytoplasm"/>
    <property type="evidence" value="ECO:0007669"/>
    <property type="project" value="UniProtKB-SubCell"/>
</dbReference>
<dbReference type="GO" id="GO:0071456">
    <property type="term" value="P:cellular response to hypoxia"/>
    <property type="evidence" value="ECO:0007007"/>
    <property type="project" value="TAIR"/>
</dbReference>
<dbReference type="GO" id="GO:0009408">
    <property type="term" value="P:response to heat"/>
    <property type="evidence" value="ECO:0000270"/>
    <property type="project" value="TAIR"/>
</dbReference>
<dbReference type="CDD" id="cd06472">
    <property type="entry name" value="ACD_ScHsp26_like"/>
    <property type="match status" value="1"/>
</dbReference>
<dbReference type="FunFam" id="2.60.40.790:FF:000009">
    <property type="entry name" value="17.6 kDa class I heat shock protein-like"/>
    <property type="match status" value="1"/>
</dbReference>
<dbReference type="Gene3D" id="2.60.40.790">
    <property type="match status" value="1"/>
</dbReference>
<dbReference type="InterPro" id="IPR002068">
    <property type="entry name" value="A-crystallin/Hsp20_dom"/>
</dbReference>
<dbReference type="InterPro" id="IPR007052">
    <property type="entry name" value="CS_dom"/>
</dbReference>
<dbReference type="InterPro" id="IPR008978">
    <property type="entry name" value="HSP20-like_chaperone"/>
</dbReference>
<dbReference type="InterPro" id="IPR031107">
    <property type="entry name" value="Small_HSP"/>
</dbReference>
<dbReference type="PANTHER" id="PTHR11527">
    <property type="entry name" value="HEAT-SHOCK PROTEIN 20 FAMILY MEMBER"/>
    <property type="match status" value="1"/>
</dbReference>
<dbReference type="Pfam" id="PF00011">
    <property type="entry name" value="HSP20"/>
    <property type="match status" value="1"/>
</dbReference>
<dbReference type="SUPFAM" id="SSF49764">
    <property type="entry name" value="HSP20-like chaperones"/>
    <property type="match status" value="1"/>
</dbReference>
<dbReference type="PROSITE" id="PS01031">
    <property type="entry name" value="SHSP"/>
    <property type="match status" value="1"/>
</dbReference>
<proteinExistence type="evidence at protein level"/>